<geneLocation type="chloroplast"/>
<dbReference type="EC" id="7.1.1.-" evidence="1"/>
<dbReference type="EMBL" id="DQ899947">
    <property type="protein sequence ID" value="ABI32561.1"/>
    <property type="molecule type" value="Genomic_DNA"/>
</dbReference>
<dbReference type="RefSeq" id="YP_740254.1">
    <property type="nucleotide sequence ID" value="NC_008326.1"/>
</dbReference>
<dbReference type="SMR" id="Q0G9G7"/>
<dbReference type="GeneID" id="4266686"/>
<dbReference type="GO" id="GO:0009535">
    <property type="term" value="C:chloroplast thylakoid membrane"/>
    <property type="evidence" value="ECO:0007669"/>
    <property type="project" value="UniProtKB-SubCell"/>
</dbReference>
<dbReference type="GO" id="GO:0030964">
    <property type="term" value="C:NADH dehydrogenase complex"/>
    <property type="evidence" value="ECO:0007669"/>
    <property type="project" value="TreeGrafter"/>
</dbReference>
<dbReference type="GO" id="GO:0016655">
    <property type="term" value="F:oxidoreductase activity, acting on NAD(P)H, quinone or similar compound as acceptor"/>
    <property type="evidence" value="ECO:0007669"/>
    <property type="project" value="UniProtKB-UniRule"/>
</dbReference>
<dbReference type="GO" id="GO:0048038">
    <property type="term" value="F:quinone binding"/>
    <property type="evidence" value="ECO:0007669"/>
    <property type="project" value="UniProtKB-KW"/>
</dbReference>
<dbReference type="GO" id="GO:0042773">
    <property type="term" value="P:ATP synthesis coupled electron transport"/>
    <property type="evidence" value="ECO:0007669"/>
    <property type="project" value="InterPro"/>
</dbReference>
<dbReference type="GO" id="GO:0019684">
    <property type="term" value="P:photosynthesis, light reaction"/>
    <property type="evidence" value="ECO:0007669"/>
    <property type="project" value="UniProtKB-UniRule"/>
</dbReference>
<dbReference type="FunFam" id="1.10.287.3510:FF:000001">
    <property type="entry name" value="NADH-quinone oxidoreductase subunit K"/>
    <property type="match status" value="1"/>
</dbReference>
<dbReference type="Gene3D" id="1.10.287.3510">
    <property type="match status" value="1"/>
</dbReference>
<dbReference type="HAMAP" id="MF_01456">
    <property type="entry name" value="NDH1_NuoK"/>
    <property type="match status" value="1"/>
</dbReference>
<dbReference type="InterPro" id="IPR001133">
    <property type="entry name" value="NADH_UbQ_OxRdtase_chain4L/K"/>
</dbReference>
<dbReference type="InterPro" id="IPR039428">
    <property type="entry name" value="NUOK/Mnh_C1-like"/>
</dbReference>
<dbReference type="NCBIfam" id="NF004320">
    <property type="entry name" value="PRK05715.1-2"/>
    <property type="match status" value="1"/>
</dbReference>
<dbReference type="NCBIfam" id="NF004322">
    <property type="entry name" value="PRK05715.1-4"/>
    <property type="match status" value="1"/>
</dbReference>
<dbReference type="PANTHER" id="PTHR11434:SF16">
    <property type="entry name" value="NADH-UBIQUINONE OXIDOREDUCTASE CHAIN 4L"/>
    <property type="match status" value="1"/>
</dbReference>
<dbReference type="PANTHER" id="PTHR11434">
    <property type="entry name" value="NADH-UBIQUINONE OXIDOREDUCTASE SUBUNIT ND4L"/>
    <property type="match status" value="1"/>
</dbReference>
<dbReference type="Pfam" id="PF00420">
    <property type="entry name" value="Oxidored_q2"/>
    <property type="match status" value="1"/>
</dbReference>
<proteinExistence type="inferred from homology"/>
<accession>Q0G9G7</accession>
<sequence length="101" mass="11193">MMTEHVLILSAYLFSIGIYGLITSRNMVRALMCLELILNAVNLNLVTFSDLFDSRQLKGDIFSIFVIAIAAAEAAIGPAIVSSIYRNRKSTRINQSNLLNK</sequence>
<feature type="chain" id="PRO_0000360341" description="NAD(P)H-quinone oxidoreductase subunit 4L, chloroplastic">
    <location>
        <begin position="1"/>
        <end position="101"/>
    </location>
</feature>
<feature type="transmembrane region" description="Helical" evidence="1">
    <location>
        <begin position="2"/>
        <end position="22"/>
    </location>
</feature>
<feature type="transmembrane region" description="Helical" evidence="1">
    <location>
        <begin position="32"/>
        <end position="52"/>
    </location>
</feature>
<feature type="transmembrane region" description="Helical" evidence="1">
    <location>
        <begin position="61"/>
        <end position="81"/>
    </location>
</feature>
<keyword id="KW-0150">Chloroplast</keyword>
<keyword id="KW-0472">Membrane</keyword>
<keyword id="KW-0520">NAD</keyword>
<keyword id="KW-0521">NADP</keyword>
<keyword id="KW-0934">Plastid</keyword>
<keyword id="KW-0618">Plastoquinone</keyword>
<keyword id="KW-0874">Quinone</keyword>
<keyword id="KW-0793">Thylakoid</keyword>
<keyword id="KW-1278">Translocase</keyword>
<keyword id="KW-0812">Transmembrane</keyword>
<keyword id="KW-1133">Transmembrane helix</keyword>
<keyword id="KW-0813">Transport</keyword>
<organism>
    <name type="scientific">Liriodendron tulipifera</name>
    <name type="common">Tuliptree</name>
    <name type="synonym">Tulip poplar</name>
    <dbReference type="NCBI Taxonomy" id="3415"/>
    <lineage>
        <taxon>Eukaryota</taxon>
        <taxon>Viridiplantae</taxon>
        <taxon>Streptophyta</taxon>
        <taxon>Embryophyta</taxon>
        <taxon>Tracheophyta</taxon>
        <taxon>Spermatophyta</taxon>
        <taxon>Magnoliopsida</taxon>
        <taxon>Magnoliidae</taxon>
        <taxon>Magnoliales</taxon>
        <taxon>Magnoliaceae</taxon>
        <taxon>Liriodendron</taxon>
    </lineage>
</organism>
<reference key="1">
    <citation type="journal article" date="2006" name="BMC Evol. Biol.">
        <title>Complete plastid genome sequences of Drimys, Liriodendron, and Piper: implications for the phylogenetic relationships of magnoliids.</title>
        <authorList>
            <person name="Cai Z."/>
            <person name="Penaflor C."/>
            <person name="Kuehl J.V."/>
            <person name="Leebens-Mack J."/>
            <person name="Carlson J.E."/>
            <person name="dePamphilis C.W."/>
            <person name="Boore J.L."/>
            <person name="Jansen R.K."/>
        </authorList>
    </citation>
    <scope>NUCLEOTIDE SEQUENCE [LARGE SCALE GENOMIC DNA]</scope>
</reference>
<name>NU4LC_LIRTU</name>
<comment type="function">
    <text evidence="1">NDH shuttles electrons from NAD(P)H:plastoquinone, via FMN and iron-sulfur (Fe-S) centers, to quinones in the photosynthetic chain and possibly in a chloroplast respiratory chain. The immediate electron acceptor for the enzyme in this species is believed to be plastoquinone. Couples the redox reaction to proton translocation, and thus conserves the redox energy in a proton gradient.</text>
</comment>
<comment type="catalytic activity">
    <reaction evidence="1">
        <text>a plastoquinone + NADH + (n+1) H(+)(in) = a plastoquinol + NAD(+) + n H(+)(out)</text>
        <dbReference type="Rhea" id="RHEA:42608"/>
        <dbReference type="Rhea" id="RHEA-COMP:9561"/>
        <dbReference type="Rhea" id="RHEA-COMP:9562"/>
        <dbReference type="ChEBI" id="CHEBI:15378"/>
        <dbReference type="ChEBI" id="CHEBI:17757"/>
        <dbReference type="ChEBI" id="CHEBI:57540"/>
        <dbReference type="ChEBI" id="CHEBI:57945"/>
        <dbReference type="ChEBI" id="CHEBI:62192"/>
    </reaction>
</comment>
<comment type="catalytic activity">
    <reaction evidence="1">
        <text>a plastoquinone + NADPH + (n+1) H(+)(in) = a plastoquinol + NADP(+) + n H(+)(out)</text>
        <dbReference type="Rhea" id="RHEA:42612"/>
        <dbReference type="Rhea" id="RHEA-COMP:9561"/>
        <dbReference type="Rhea" id="RHEA-COMP:9562"/>
        <dbReference type="ChEBI" id="CHEBI:15378"/>
        <dbReference type="ChEBI" id="CHEBI:17757"/>
        <dbReference type="ChEBI" id="CHEBI:57783"/>
        <dbReference type="ChEBI" id="CHEBI:58349"/>
        <dbReference type="ChEBI" id="CHEBI:62192"/>
    </reaction>
</comment>
<comment type="subunit">
    <text evidence="1">NDH is composed of at least 16 different subunits, 5 of which are encoded in the nucleus.</text>
</comment>
<comment type="subcellular location">
    <subcellularLocation>
        <location evidence="1">Plastid</location>
        <location evidence="1">Chloroplast thylakoid membrane</location>
        <topology evidence="1">Multi-pass membrane protein</topology>
    </subcellularLocation>
</comment>
<comment type="similarity">
    <text evidence="1">Belongs to the complex I subunit 4L family.</text>
</comment>
<evidence type="ECO:0000255" key="1">
    <source>
        <dbReference type="HAMAP-Rule" id="MF_01456"/>
    </source>
</evidence>
<gene>
    <name evidence="1" type="primary">ndhE</name>
</gene>
<protein>
    <recommendedName>
        <fullName evidence="1">NAD(P)H-quinone oxidoreductase subunit 4L, chloroplastic</fullName>
        <ecNumber evidence="1">7.1.1.-</ecNumber>
    </recommendedName>
    <alternativeName>
        <fullName evidence="1">NAD(P)H dehydrogenase subunit 4L</fullName>
    </alternativeName>
    <alternativeName>
        <fullName evidence="1">NADH-plastoquinone oxidoreductase subunit 4L</fullName>
    </alternativeName>
</protein>